<protein>
    <recommendedName>
        <fullName evidence="15">Cholesterol transporter ABCA5</fullName>
        <ecNumber evidence="16">7.6.2.-</ecNumber>
    </recommendedName>
    <alternativeName>
        <fullName evidence="15">ATP-binding cassette sub-family A member 5</fullName>
    </alternativeName>
</protein>
<feature type="chain" id="PRO_0000250669" description="Cholesterol transporter ABCA5">
    <location>
        <begin position="1"/>
        <end position="1642"/>
    </location>
</feature>
<feature type="transmembrane region" description="Helical" evidence="4">
    <location>
        <begin position="32"/>
        <end position="52"/>
    </location>
</feature>
<feature type="transmembrane region" description="Helical" evidence="4">
    <location>
        <begin position="220"/>
        <end position="240"/>
    </location>
</feature>
<feature type="transmembrane region" description="Helical" evidence="4">
    <location>
        <begin position="264"/>
        <end position="284"/>
    </location>
</feature>
<feature type="transmembrane region" description="Helical" evidence="4">
    <location>
        <begin position="297"/>
        <end position="317"/>
    </location>
</feature>
<feature type="transmembrane region" description="Helical" evidence="4">
    <location>
        <begin position="328"/>
        <end position="348"/>
    </location>
</feature>
<feature type="transmembrane region" description="Helical" evidence="4">
    <location>
        <begin position="355"/>
        <end position="375"/>
    </location>
</feature>
<feature type="transmembrane region" description="Helical" evidence="4">
    <location>
        <begin position="396"/>
        <end position="416"/>
    </location>
</feature>
<feature type="transmembrane region" description="Helical" evidence="4">
    <location>
        <begin position="866"/>
        <end position="886"/>
    </location>
</feature>
<feature type="transmembrane region" description="Helical" evidence="4">
    <location>
        <begin position="967"/>
        <end position="987"/>
    </location>
</feature>
<feature type="transmembrane region" description="Helical" evidence="4">
    <location>
        <begin position="1021"/>
        <end position="1041"/>
    </location>
</feature>
<feature type="transmembrane region" description="Helical" evidence="4">
    <location>
        <begin position="1071"/>
        <end position="1091"/>
    </location>
</feature>
<feature type="transmembrane region" description="Helical" evidence="4">
    <location>
        <begin position="1102"/>
        <end position="1122"/>
    </location>
</feature>
<feature type="transmembrane region" description="Helical" evidence="4">
    <location>
        <begin position="1139"/>
        <end position="1159"/>
    </location>
</feature>
<feature type="transmembrane region" description="Helical" evidence="4">
    <location>
        <begin position="1169"/>
        <end position="1189"/>
    </location>
</feature>
<feature type="transmembrane region" description="Helical" evidence="4">
    <location>
        <begin position="1207"/>
        <end position="1227"/>
    </location>
</feature>
<feature type="domain" description="ABC transporter 1" evidence="5">
    <location>
        <begin position="478"/>
        <end position="713"/>
    </location>
</feature>
<feature type="domain" description="ABC transporter 2" evidence="5">
    <location>
        <begin position="1290"/>
        <end position="1533"/>
    </location>
</feature>
<feature type="region of interest" description="Disordered" evidence="6">
    <location>
        <begin position="1249"/>
        <end position="1268"/>
    </location>
</feature>
<feature type="compositionally biased region" description="Acidic residues" evidence="6">
    <location>
        <begin position="1259"/>
        <end position="1268"/>
    </location>
</feature>
<feature type="binding site" evidence="5">
    <location>
        <begin position="514"/>
        <end position="521"/>
    </location>
    <ligand>
        <name>ATP</name>
        <dbReference type="ChEBI" id="CHEBI:30616"/>
        <label>1</label>
    </ligand>
</feature>
<feature type="binding site" evidence="5">
    <location>
        <begin position="1333"/>
        <end position="1340"/>
    </location>
    <ligand>
        <name>ATP</name>
        <dbReference type="ChEBI" id="CHEBI:30616"/>
        <label>2</label>
    </ligand>
</feature>
<feature type="glycosylation site" description="N-linked (GlcNAc...) asparagine" evidence="4">
    <location>
        <position position="86"/>
    </location>
</feature>
<feature type="glycosylation site" description="N-linked (GlcNAc...) asparagine" evidence="4">
    <location>
        <position position="458"/>
    </location>
</feature>
<feature type="glycosylation site" description="N-linked (GlcNAc...) asparagine" evidence="4">
    <location>
        <position position="996"/>
    </location>
</feature>
<feature type="splice variant" id="VSP_020690" description="In isoform 3." evidence="14">
    <location>
        <begin position="1"/>
        <end position="777"/>
    </location>
</feature>
<feature type="splice variant" id="VSP_020691" description="In isoform 2." evidence="13">
    <original>DSDI</original>
    <variation>GESV</variation>
    <location>
        <begin position="922"/>
        <end position="925"/>
    </location>
</feature>
<feature type="splice variant" id="VSP_020692" description="In isoform 2." evidence="13">
    <location>
        <begin position="926"/>
        <end position="1642"/>
    </location>
</feature>
<feature type="sequence variant" id="VAR_027571" description="In dbSNP:rs12383.">
    <original>Q</original>
    <variation>K</variation>
    <location>
        <position position="93"/>
    </location>
</feature>
<feature type="sequence variant" id="VAR_048128" description="In dbSNP:rs11544715." evidence="8">
    <original>A</original>
    <variation>T</variation>
    <location>
        <position position="178"/>
    </location>
</feature>
<feature type="sequence variant" id="VAR_027572" description="In dbSNP:rs17686569." evidence="8">
    <original>Q</original>
    <variation>R</variation>
    <location>
        <position position="484"/>
    </location>
</feature>
<feature type="sequence variant" id="VAR_027573" description="In dbSNP:rs9898003.">
    <original>M</original>
    <variation>V</variation>
    <location>
        <position position="753"/>
    </location>
</feature>
<feature type="sequence variant" id="VAR_027574" description="In dbSNP:rs536009." evidence="8 9 12">
    <original>A</original>
    <variation>S</variation>
    <location>
        <position position="832"/>
    </location>
</feature>
<feature type="sequence variant" id="VAR_027575" description="In dbSNP:rs557491." evidence="7">
    <original>M</original>
    <variation>V</variation>
    <location>
        <position position="960"/>
    </location>
</feature>
<feature type="sequence variant" id="VAR_048129" description="In dbSNP:rs11544716.">
    <original>D</original>
    <variation>G</variation>
    <location>
        <position position="1260"/>
    </location>
</feature>
<feature type="sequence conflict" description="In Ref. 3; BAB71208." evidence="15" ref="3">
    <original>Y</original>
    <variation>H</variation>
    <location>
        <position position="1215"/>
    </location>
</feature>
<feature type="sequence conflict" description="In Ref. 2; CAB93535." evidence="15" ref="2">
    <original>V</original>
    <variation>I</variation>
    <location>
        <position position="1357"/>
    </location>
</feature>
<feature type="sequence conflict" description="In Ref. 2; CAB93535." evidence="15" ref="2">
    <original>T</original>
    <variation>S</variation>
    <location>
        <position position="1366"/>
    </location>
</feature>
<feature type="sequence conflict" description="In Ref. 3; BAB71208." evidence="15" ref="3">
    <original>D</original>
    <variation>G</variation>
    <location>
        <position position="1371"/>
    </location>
</feature>
<feature type="sequence conflict" description="In Ref. 3; BAB71208." evidence="15" ref="3">
    <original>A</original>
    <variation>G</variation>
    <location>
        <position position="1419"/>
    </location>
</feature>
<feature type="sequence conflict" description="In Ref. 3; BAB71208." evidence="15" ref="3">
    <original>K</original>
    <variation>R</variation>
    <location>
        <position position="1523"/>
    </location>
</feature>
<keyword id="KW-0025">Alternative splicing</keyword>
<keyword id="KW-0067">ATP-binding</keyword>
<keyword id="KW-1003">Cell membrane</keyword>
<keyword id="KW-0967">Endosome</keyword>
<keyword id="KW-0325">Glycoprotein</keyword>
<keyword id="KW-0333">Golgi apparatus</keyword>
<keyword id="KW-0445">Lipid transport</keyword>
<keyword id="KW-0458">Lysosome</keyword>
<keyword id="KW-0472">Membrane</keyword>
<keyword id="KW-0547">Nucleotide-binding</keyword>
<keyword id="KW-1267">Proteomics identification</keyword>
<keyword id="KW-1185">Reference proteome</keyword>
<keyword id="KW-0677">Repeat</keyword>
<keyword id="KW-1278">Translocase</keyword>
<keyword id="KW-0812">Transmembrane</keyword>
<keyword id="KW-1133">Transmembrane helix</keyword>
<keyword id="KW-0813">Transport</keyword>
<gene>
    <name evidence="17" type="primary">ABCA5</name>
    <name type="synonym">KIAA1888</name>
</gene>
<comment type="function">
    <text evidence="3 11">Cholesterol efflux transporter in macrophages that is responsible for APOAI/high-density lipoproteins (HDL) formation at the plasma membrane under high cholesterol levels and participates in reverse cholesterol transport (PubMed:25125465). May play a role in the processing of autolysosomes (By similarity).</text>
</comment>
<comment type="catalytic activity">
    <reaction evidence="16">
        <text>cholesterol(in) + ATP + H2O = cholesterol(out) + ADP + phosphate + H(+)</text>
        <dbReference type="Rhea" id="RHEA:39051"/>
        <dbReference type="ChEBI" id="CHEBI:15377"/>
        <dbReference type="ChEBI" id="CHEBI:15378"/>
        <dbReference type="ChEBI" id="CHEBI:16113"/>
        <dbReference type="ChEBI" id="CHEBI:30616"/>
        <dbReference type="ChEBI" id="CHEBI:43474"/>
        <dbReference type="ChEBI" id="CHEBI:456216"/>
    </reaction>
    <physiologicalReaction direction="left-to-right" evidence="16">
        <dbReference type="Rhea" id="RHEA:39052"/>
    </physiologicalReaction>
</comment>
<comment type="subcellular location">
    <subcellularLocation>
        <location evidence="2">Golgi apparatus membrane</location>
        <topology evidence="2">Multi-pass membrane protein</topology>
    </subcellularLocation>
    <subcellularLocation>
        <location evidence="3">Lysosome membrane</location>
        <topology evidence="3">Multi-pass membrane protein</topology>
    </subcellularLocation>
    <subcellularLocation>
        <location evidence="3">Late endosome membrane</location>
        <topology evidence="3">Multi-pass membrane protein</topology>
    </subcellularLocation>
    <subcellularLocation>
        <location evidence="3">Cell membrane</location>
    </subcellularLocation>
    <text evidence="3">Localized at cell membrane under high cholesterol levels.</text>
</comment>
<comment type="alternative products">
    <event type="alternative splicing"/>
    <isoform>
        <id>Q8WWZ7-1</id>
        <name>1</name>
        <sequence type="displayed"/>
    </isoform>
    <isoform>
        <id>Q8WWZ7-2</id>
        <name>2</name>
        <name>V20+16</name>
        <sequence type="described" ref="VSP_020691 VSP_020692"/>
    </isoform>
    <isoform>
        <id>Q8WWZ7-3</id>
        <name>3</name>
        <sequence type="described" ref="VSP_020690"/>
    </isoform>
</comment>
<comment type="tissue specificity">
    <text evidence="8 10 11 12">Ubiquitously expressed. Highly expressed in testis, skeletal muscle, kidney, liver and placenta. Expressed in both the epithelial and mesenchymal compartments, present within the outer root sheath (ORS) of the hair follicle as well as dermal sheath (PubMed:24831815). Expressed in multiple regions of the brain, including the hippocampus, superior frontal and inferior temporal cortices (PubMed:25125465). Strongly expressed in neurons and moderately in microglia, with only weak expression in astrocytes and oligodendrocytes (PubMed:25125465).</text>
</comment>
<comment type="developmental stage">
    <text evidence="12">Expressed in fetal liver, kidney and brain.</text>
</comment>
<comment type="PTM">
    <text evidence="1">N-glycosylated.</text>
</comment>
<comment type="similarity">
    <text evidence="15">Belongs to the ABC transporter superfamily. ABCA family.</text>
</comment>
<comment type="sequence caution" evidence="15">
    <conflict type="erroneous initiation">
        <sequence resource="EMBL-CDS" id="BAB71700"/>
    </conflict>
</comment>
<comment type="online information" name="ABCMdb">
    <link uri="http://abcm2.hegelab.org/search"/>
    <text>Database for mutations in ABC proteins</text>
</comment>
<name>ABCA5_HUMAN</name>
<reference key="1">
    <citation type="journal article" date="2001" name="GeneScreen">
        <title>Identifying and characterizing a five-gene cluster of ATP-binding cassette transporters mapping to human chromosome 17q24: a new subgroup within the ABCA subfamily.</title>
        <authorList>
            <person name="Arnould I."/>
            <person name="Schriml L.M."/>
            <person name="Prades C."/>
            <person name="Lachtermacher-Triunfol M."/>
            <person name="Schneider T."/>
            <person name="Maintoux C."/>
            <person name="Lemoine C."/>
            <person name="Debono D."/>
            <person name="Devaud C."/>
            <person name="Naudin L."/>
            <person name="Bauche S."/>
            <person name="Annat M."/>
            <person name="Annilo T."/>
            <person name="Allikmets R."/>
            <person name="Gold B."/>
            <person name="Denefle P."/>
            <person name="Rosier M."/>
            <person name="Dean M."/>
        </authorList>
    </citation>
    <scope>NUCLEOTIDE SEQUENCE [MRNA] (ISOFORM 1)</scope>
    <scope>VARIANT SER-832</scope>
    <scope>TISSUE SPECIFICITY</scope>
    <scope>DEVELOPMENTAL STAGE</scope>
    <source>
        <tissue>Testis</tissue>
    </source>
</reference>
<reference key="2">
    <citation type="journal article" date="2003" name="Biochem. Biophys. Res. Commun.">
        <title>Cloning of human and rat ABCA5/Abca5 and detection of a human splice variant.</title>
        <authorList>
            <person name="Petry F."/>
            <person name="Kotthaus A."/>
            <person name="Hirsch-Ernst K.I."/>
        </authorList>
    </citation>
    <scope>NUCLEOTIDE SEQUENCE [MRNA] (ISOFORMS 1 AND 2)</scope>
    <scope>TISSUE SPECIFICITY</scope>
    <scope>VARIANTS THR-178; ARG-484 AND SER-832</scope>
    <source>
        <tissue>Hepatoma</tissue>
        <tissue>Testis</tissue>
    </source>
</reference>
<reference key="3">
    <citation type="journal article" date="2004" name="Nat. Genet.">
        <title>Complete sequencing and characterization of 21,243 full-length human cDNAs.</title>
        <authorList>
            <person name="Ota T."/>
            <person name="Suzuki Y."/>
            <person name="Nishikawa T."/>
            <person name="Otsuki T."/>
            <person name="Sugiyama T."/>
            <person name="Irie R."/>
            <person name="Wakamatsu A."/>
            <person name="Hayashi K."/>
            <person name="Sato H."/>
            <person name="Nagai K."/>
            <person name="Kimura K."/>
            <person name="Makita H."/>
            <person name="Sekine M."/>
            <person name="Obayashi M."/>
            <person name="Nishi T."/>
            <person name="Shibahara T."/>
            <person name="Tanaka T."/>
            <person name="Ishii S."/>
            <person name="Yamamoto J."/>
            <person name="Saito K."/>
            <person name="Kawai Y."/>
            <person name="Isono Y."/>
            <person name="Nakamura Y."/>
            <person name="Nagahari K."/>
            <person name="Murakami K."/>
            <person name="Yasuda T."/>
            <person name="Iwayanagi T."/>
            <person name="Wagatsuma M."/>
            <person name="Shiratori A."/>
            <person name="Sudo H."/>
            <person name="Hosoiri T."/>
            <person name="Kaku Y."/>
            <person name="Kodaira H."/>
            <person name="Kondo H."/>
            <person name="Sugawara M."/>
            <person name="Takahashi M."/>
            <person name="Kanda K."/>
            <person name="Yokoi T."/>
            <person name="Furuya T."/>
            <person name="Kikkawa E."/>
            <person name="Omura Y."/>
            <person name="Abe K."/>
            <person name="Kamihara K."/>
            <person name="Katsuta N."/>
            <person name="Sato K."/>
            <person name="Tanikawa M."/>
            <person name="Yamazaki M."/>
            <person name="Ninomiya K."/>
            <person name="Ishibashi T."/>
            <person name="Yamashita H."/>
            <person name="Murakawa K."/>
            <person name="Fujimori K."/>
            <person name="Tanai H."/>
            <person name="Kimata M."/>
            <person name="Watanabe M."/>
            <person name="Hiraoka S."/>
            <person name="Chiba Y."/>
            <person name="Ishida S."/>
            <person name="Ono Y."/>
            <person name="Takiguchi S."/>
            <person name="Watanabe S."/>
            <person name="Yosida M."/>
            <person name="Hotuta T."/>
            <person name="Kusano J."/>
            <person name="Kanehori K."/>
            <person name="Takahashi-Fujii A."/>
            <person name="Hara H."/>
            <person name="Tanase T.-O."/>
            <person name="Nomura Y."/>
            <person name="Togiya S."/>
            <person name="Komai F."/>
            <person name="Hara R."/>
            <person name="Takeuchi K."/>
            <person name="Arita M."/>
            <person name="Imose N."/>
            <person name="Musashino K."/>
            <person name="Yuuki H."/>
            <person name="Oshima A."/>
            <person name="Sasaki N."/>
            <person name="Aotsuka S."/>
            <person name="Yoshikawa Y."/>
            <person name="Matsunawa H."/>
            <person name="Ichihara T."/>
            <person name="Shiohata N."/>
            <person name="Sano S."/>
            <person name="Moriya S."/>
            <person name="Momiyama H."/>
            <person name="Satoh N."/>
            <person name="Takami S."/>
            <person name="Terashima Y."/>
            <person name="Suzuki O."/>
            <person name="Nakagawa S."/>
            <person name="Senoh A."/>
            <person name="Mizoguchi H."/>
            <person name="Goto Y."/>
            <person name="Shimizu F."/>
            <person name="Wakebe H."/>
            <person name="Hishigaki H."/>
            <person name="Watanabe T."/>
            <person name="Sugiyama A."/>
            <person name="Takemoto M."/>
            <person name="Kawakami B."/>
            <person name="Yamazaki M."/>
            <person name="Watanabe K."/>
            <person name="Kumagai A."/>
            <person name="Itakura S."/>
            <person name="Fukuzumi Y."/>
            <person name="Fujimori Y."/>
            <person name="Komiyama M."/>
            <person name="Tashiro H."/>
            <person name="Tanigami A."/>
            <person name="Fujiwara T."/>
            <person name="Ono T."/>
            <person name="Yamada K."/>
            <person name="Fujii Y."/>
            <person name="Ozaki K."/>
            <person name="Hirao M."/>
            <person name="Ohmori Y."/>
            <person name="Kawabata A."/>
            <person name="Hikiji T."/>
            <person name="Kobatake N."/>
            <person name="Inagaki H."/>
            <person name="Ikema Y."/>
            <person name="Okamoto S."/>
            <person name="Okitani R."/>
            <person name="Kawakami T."/>
            <person name="Noguchi S."/>
            <person name="Itoh T."/>
            <person name="Shigeta K."/>
            <person name="Senba T."/>
            <person name="Matsumura K."/>
            <person name="Nakajima Y."/>
            <person name="Mizuno T."/>
            <person name="Morinaga M."/>
            <person name="Sasaki M."/>
            <person name="Togashi T."/>
            <person name="Oyama M."/>
            <person name="Hata H."/>
            <person name="Watanabe M."/>
            <person name="Komatsu T."/>
            <person name="Mizushima-Sugano J."/>
            <person name="Satoh T."/>
            <person name="Shirai Y."/>
            <person name="Takahashi Y."/>
            <person name="Nakagawa K."/>
            <person name="Okumura K."/>
            <person name="Nagase T."/>
            <person name="Nomura N."/>
            <person name="Kikuchi H."/>
            <person name="Masuho Y."/>
            <person name="Yamashita R."/>
            <person name="Nakai K."/>
            <person name="Yada T."/>
            <person name="Nakamura Y."/>
            <person name="Ohara O."/>
            <person name="Isogai T."/>
            <person name="Sugano S."/>
        </authorList>
    </citation>
    <scope>NUCLEOTIDE SEQUENCE [LARGE SCALE MRNA] (ISOFORM 3)</scope>
    <scope>NUCLEOTIDE SEQUENCE [LARGE SCALE MRNA] OF 1187-1642 (ISOFORM 1)</scope>
    <scope>VARIANT SER-832</scope>
    <source>
        <tissue>Teratocarcinoma</tissue>
        <tissue>Testis</tissue>
    </source>
</reference>
<reference key="4">
    <citation type="journal article" date="2001" name="DNA Res.">
        <title>Prediction of the coding sequences of unidentified human genes. XXI. The complete sequences of 60 new cDNA clones from brain which code for large proteins.</title>
        <authorList>
            <person name="Nagase T."/>
            <person name="Kikuno R."/>
            <person name="Ohara O."/>
        </authorList>
    </citation>
    <scope>NUCLEOTIDE SEQUENCE [LARGE SCALE MRNA] OF 906-1642 (ISOFORM 1)</scope>
    <scope>VARIANT VAL-960</scope>
    <source>
        <tissue>Brain</tissue>
    </source>
</reference>
<reference key="5">
    <citation type="journal article" date="2014" name="PLoS Genet.">
        <title>Mutations in the cholesterol transporter gene ABCA5 are associated with excessive hair overgrowth.</title>
        <authorList>
            <person name="DeStefano G.M."/>
            <person name="Kurban M."/>
            <person name="Anyane-Yeboa K."/>
            <person name="Dall'Armi C."/>
            <person name="Di Paolo G."/>
            <person name="Feenstra H."/>
            <person name="Silverberg N."/>
            <person name="Rohena L."/>
            <person name="Lopez-Cepeda L.D."/>
            <person name="Jobanputra V."/>
            <person name="Fantauzzo K.A."/>
            <person name="Kiuru M."/>
            <person name="Tadin-Strapps M."/>
            <person name="Sobrino A."/>
            <person name="Vitebsky A."/>
            <person name="Warburton D."/>
            <person name="Levy B."/>
            <person name="Salas-Alanis J.C."/>
            <person name="Christiano A.M."/>
        </authorList>
    </citation>
    <scope>TISSUE SPECIFICITY</scope>
</reference>
<reference key="6">
    <citation type="journal article" date="2015" name="J. Alzheimers Dis.">
        <title>ABCA5 regulates amyloid-beta peptide production and is associated with Alzheimer's disease neuropathology.</title>
        <authorList>
            <person name="Fu Y."/>
            <person name="Hsiao J.H."/>
            <person name="Paxinos G."/>
            <person name="Halliday G.M."/>
            <person name="Kim W.S."/>
        </authorList>
    </citation>
    <scope>TISSUE SPECIFICITY</scope>
    <scope>FUNCTION</scope>
    <scope>CATALYTIC ACTIVITY</scope>
</reference>
<proteinExistence type="evidence at protein level"/>
<dbReference type="EC" id="7.6.2.-" evidence="16"/>
<dbReference type="EMBL" id="AY028897">
    <property type="protein sequence ID" value="AAK30022.1"/>
    <property type="molecule type" value="mRNA"/>
</dbReference>
<dbReference type="EMBL" id="AJ275973">
    <property type="protein sequence ID" value="CAB93535.3"/>
    <property type="molecule type" value="mRNA"/>
</dbReference>
<dbReference type="EMBL" id="AJ512612">
    <property type="protein sequence ID" value="CAD54757.1"/>
    <property type="molecule type" value="mRNA"/>
</dbReference>
<dbReference type="EMBL" id="AK056533">
    <property type="protein sequence ID" value="BAB71208.1"/>
    <property type="molecule type" value="mRNA"/>
</dbReference>
<dbReference type="EMBL" id="AK058170">
    <property type="protein sequence ID" value="BAB71700.1"/>
    <property type="status" value="ALT_INIT"/>
    <property type="molecule type" value="mRNA"/>
</dbReference>
<dbReference type="EMBL" id="AB067475">
    <property type="protein sequence ID" value="BAB67781.1"/>
    <property type="molecule type" value="mRNA"/>
</dbReference>
<dbReference type="CCDS" id="CCDS11685.1">
    <molecule id="Q8WWZ7-1"/>
</dbReference>
<dbReference type="RefSeq" id="NP_061142.2">
    <molecule id="Q8WWZ7-1"/>
    <property type="nucleotide sequence ID" value="NM_018672.4"/>
</dbReference>
<dbReference type="RefSeq" id="NP_758424.1">
    <molecule id="Q8WWZ7-1"/>
    <property type="nucleotide sequence ID" value="NM_172232.4"/>
</dbReference>
<dbReference type="SMR" id="Q8WWZ7"/>
<dbReference type="BioGRID" id="117024">
    <property type="interactions" value="9"/>
</dbReference>
<dbReference type="FunCoup" id="Q8WWZ7">
    <property type="interactions" value="434"/>
</dbReference>
<dbReference type="IntAct" id="Q8WWZ7">
    <property type="interactions" value="4"/>
</dbReference>
<dbReference type="STRING" id="9606.ENSP00000376443"/>
<dbReference type="DrugBank" id="DB00864">
    <property type="generic name" value="Tacrolimus"/>
</dbReference>
<dbReference type="TCDB" id="3.A.1.211.9">
    <property type="family name" value="the atp-binding cassette (abc) superfamily"/>
</dbReference>
<dbReference type="GlyCosmos" id="Q8WWZ7">
    <property type="glycosylation" value="3 sites, No reported glycans"/>
</dbReference>
<dbReference type="GlyGen" id="Q8WWZ7">
    <property type="glycosylation" value="3 sites"/>
</dbReference>
<dbReference type="iPTMnet" id="Q8WWZ7"/>
<dbReference type="PhosphoSitePlus" id="Q8WWZ7"/>
<dbReference type="BioMuta" id="ABCA5"/>
<dbReference type="DMDM" id="115503762"/>
<dbReference type="jPOST" id="Q8WWZ7"/>
<dbReference type="MassIVE" id="Q8WWZ7"/>
<dbReference type="PaxDb" id="9606-ENSP00000376443"/>
<dbReference type="PeptideAtlas" id="Q8WWZ7"/>
<dbReference type="ProteomicsDB" id="74970">
    <molecule id="Q8WWZ7-1"/>
</dbReference>
<dbReference type="ProteomicsDB" id="74971">
    <molecule id="Q8WWZ7-2"/>
</dbReference>
<dbReference type="ProteomicsDB" id="74972">
    <molecule id="Q8WWZ7-3"/>
</dbReference>
<dbReference type="Antibodypedia" id="19335">
    <property type="antibodies" value="174 antibodies from 28 providers"/>
</dbReference>
<dbReference type="DNASU" id="23461"/>
<dbReference type="Ensembl" id="ENST00000392676.8">
    <molecule id="Q8WWZ7-1"/>
    <property type="protein sequence ID" value="ENSP00000376443.2"/>
    <property type="gene ID" value="ENSG00000154265.16"/>
</dbReference>
<dbReference type="Ensembl" id="ENST00000588877.5">
    <molecule id="Q8WWZ7-1"/>
    <property type="protein sequence ID" value="ENSP00000467882.1"/>
    <property type="gene ID" value="ENSG00000154265.16"/>
</dbReference>
<dbReference type="GeneID" id="23461"/>
<dbReference type="KEGG" id="hsa:23461"/>
<dbReference type="MANE-Select" id="ENST00000392676.8">
    <property type="protein sequence ID" value="ENSP00000376443.2"/>
    <property type="RefSeq nucleotide sequence ID" value="NM_172232.4"/>
    <property type="RefSeq protein sequence ID" value="NP_758424.1"/>
</dbReference>
<dbReference type="UCSC" id="uc002jif.3">
    <molecule id="Q8WWZ7-1"/>
    <property type="organism name" value="human"/>
</dbReference>
<dbReference type="AGR" id="HGNC:35"/>
<dbReference type="CTD" id="23461"/>
<dbReference type="DisGeNET" id="23461"/>
<dbReference type="GeneCards" id="ABCA5"/>
<dbReference type="HGNC" id="HGNC:35">
    <property type="gene designation" value="ABCA5"/>
</dbReference>
<dbReference type="HPA" id="ENSG00000154265">
    <property type="expression patterns" value="Low tissue specificity"/>
</dbReference>
<dbReference type="MalaCards" id="ABCA5"/>
<dbReference type="MIM" id="612503">
    <property type="type" value="gene"/>
</dbReference>
<dbReference type="neXtProt" id="NX_Q8WWZ7"/>
<dbReference type="OpenTargets" id="ENSG00000154265"/>
<dbReference type="Orphanet" id="2026">
    <property type="disease" value="Gingival fibromatosis-hypertrichosis syndrome"/>
</dbReference>
<dbReference type="PharmGKB" id="PA24380"/>
<dbReference type="VEuPathDB" id="HostDB:ENSG00000154265"/>
<dbReference type="eggNOG" id="KOG0059">
    <property type="taxonomic scope" value="Eukaryota"/>
</dbReference>
<dbReference type="GeneTree" id="ENSGT00940000158172"/>
<dbReference type="InParanoid" id="Q8WWZ7"/>
<dbReference type="OMA" id="MNPLWPD"/>
<dbReference type="OrthoDB" id="8061355at2759"/>
<dbReference type="PAN-GO" id="Q8WWZ7">
    <property type="GO annotations" value="5 GO annotations based on evolutionary models"/>
</dbReference>
<dbReference type="PhylomeDB" id="Q8WWZ7"/>
<dbReference type="TreeFam" id="TF105192"/>
<dbReference type="PathwayCommons" id="Q8WWZ7"/>
<dbReference type="Reactome" id="R-HSA-1369062">
    <property type="pathway name" value="ABC transporters in lipid homeostasis"/>
</dbReference>
<dbReference type="SignaLink" id="Q8WWZ7"/>
<dbReference type="BioGRID-ORCS" id="23461">
    <property type="hits" value="13 hits in 1153 CRISPR screens"/>
</dbReference>
<dbReference type="ChiTaRS" id="ABCA5">
    <property type="organism name" value="human"/>
</dbReference>
<dbReference type="GenomeRNAi" id="23461"/>
<dbReference type="Pharos" id="Q8WWZ7">
    <property type="development level" value="Tbio"/>
</dbReference>
<dbReference type="PRO" id="PR:Q8WWZ7"/>
<dbReference type="Proteomes" id="UP000005640">
    <property type="component" value="Chromosome 17"/>
</dbReference>
<dbReference type="RNAct" id="Q8WWZ7">
    <property type="molecule type" value="protein"/>
</dbReference>
<dbReference type="Bgee" id="ENSG00000154265">
    <property type="expression patterns" value="Expressed in adrenal tissue and 204 other cell types or tissues"/>
</dbReference>
<dbReference type="ExpressionAtlas" id="Q8WWZ7">
    <property type="expression patterns" value="baseline and differential"/>
</dbReference>
<dbReference type="GO" id="GO:0000139">
    <property type="term" value="C:Golgi membrane"/>
    <property type="evidence" value="ECO:0007669"/>
    <property type="project" value="UniProtKB-SubCell"/>
</dbReference>
<dbReference type="GO" id="GO:0005770">
    <property type="term" value="C:late endosome"/>
    <property type="evidence" value="ECO:0000250"/>
    <property type="project" value="BHF-UCL"/>
</dbReference>
<dbReference type="GO" id="GO:0031902">
    <property type="term" value="C:late endosome membrane"/>
    <property type="evidence" value="ECO:0007669"/>
    <property type="project" value="UniProtKB-SubCell"/>
</dbReference>
<dbReference type="GO" id="GO:0005765">
    <property type="term" value="C:lysosomal membrane"/>
    <property type="evidence" value="ECO:0000304"/>
    <property type="project" value="Reactome"/>
</dbReference>
<dbReference type="GO" id="GO:0005764">
    <property type="term" value="C:lysosome"/>
    <property type="evidence" value="ECO:0000250"/>
    <property type="project" value="BHF-UCL"/>
</dbReference>
<dbReference type="GO" id="GO:0005886">
    <property type="term" value="C:plasma membrane"/>
    <property type="evidence" value="ECO:0007669"/>
    <property type="project" value="UniProtKB-SubCell"/>
</dbReference>
<dbReference type="GO" id="GO:0140359">
    <property type="term" value="F:ABC-type transporter activity"/>
    <property type="evidence" value="ECO:0007669"/>
    <property type="project" value="InterPro"/>
</dbReference>
<dbReference type="GO" id="GO:0005524">
    <property type="term" value="F:ATP binding"/>
    <property type="evidence" value="ECO:0007669"/>
    <property type="project" value="UniProtKB-KW"/>
</dbReference>
<dbReference type="GO" id="GO:0016887">
    <property type="term" value="F:ATP hydrolysis activity"/>
    <property type="evidence" value="ECO:0007669"/>
    <property type="project" value="InterPro"/>
</dbReference>
<dbReference type="GO" id="GO:0042626">
    <property type="term" value="F:ATPase-coupled transmembrane transporter activity"/>
    <property type="evidence" value="ECO:0000318"/>
    <property type="project" value="GO_Central"/>
</dbReference>
<dbReference type="GO" id="GO:0005319">
    <property type="term" value="F:lipid transporter activity"/>
    <property type="evidence" value="ECO:0000318"/>
    <property type="project" value="GO_Central"/>
</dbReference>
<dbReference type="GO" id="GO:0033344">
    <property type="term" value="P:cholesterol efflux"/>
    <property type="evidence" value="ECO:0000250"/>
    <property type="project" value="BHF-UCL"/>
</dbReference>
<dbReference type="GO" id="GO:0042632">
    <property type="term" value="P:cholesterol homeostasis"/>
    <property type="evidence" value="ECO:0000315"/>
    <property type="project" value="UniProtKB"/>
</dbReference>
<dbReference type="GO" id="GO:0008203">
    <property type="term" value="P:cholesterol metabolic process"/>
    <property type="evidence" value="ECO:0000315"/>
    <property type="project" value="UniProtKB"/>
</dbReference>
<dbReference type="GO" id="GO:0034375">
    <property type="term" value="P:high-density lipoprotein particle remodeling"/>
    <property type="evidence" value="ECO:0000250"/>
    <property type="project" value="BHF-UCL"/>
</dbReference>
<dbReference type="GO" id="GO:0006869">
    <property type="term" value="P:lipid transport"/>
    <property type="evidence" value="ECO:0000318"/>
    <property type="project" value="GO_Central"/>
</dbReference>
<dbReference type="GO" id="GO:0010745">
    <property type="term" value="P:negative regulation of macrophage derived foam cell differentiation"/>
    <property type="evidence" value="ECO:0000250"/>
    <property type="project" value="BHF-UCL"/>
</dbReference>
<dbReference type="GO" id="GO:1903064">
    <property type="term" value="P:positive regulation of reverse cholesterol transport"/>
    <property type="evidence" value="ECO:0000250"/>
    <property type="project" value="UniProtKB"/>
</dbReference>
<dbReference type="GO" id="GO:0010874">
    <property type="term" value="P:regulation of cholesterol efflux"/>
    <property type="evidence" value="ECO:0000315"/>
    <property type="project" value="UniProtKB"/>
</dbReference>
<dbReference type="GO" id="GO:0043691">
    <property type="term" value="P:reverse cholesterol transport"/>
    <property type="evidence" value="ECO:0000305"/>
    <property type="project" value="BHF-UCL"/>
</dbReference>
<dbReference type="CDD" id="cd03263">
    <property type="entry name" value="ABC_subfamily_A"/>
    <property type="match status" value="2"/>
</dbReference>
<dbReference type="FunFam" id="3.40.50.300:FF:000335">
    <property type="entry name" value="ATP binding cassette subfamily A member 5"/>
    <property type="match status" value="1"/>
</dbReference>
<dbReference type="FunFam" id="3.40.50.300:FF:000729">
    <property type="entry name" value="ATP-binding cassette, sub-family A (ABC1), member 5"/>
    <property type="match status" value="1"/>
</dbReference>
<dbReference type="Gene3D" id="3.40.50.300">
    <property type="entry name" value="P-loop containing nucleotide triphosphate hydrolases"/>
    <property type="match status" value="2"/>
</dbReference>
<dbReference type="InterPro" id="IPR003593">
    <property type="entry name" value="AAA+_ATPase"/>
</dbReference>
<dbReference type="InterPro" id="IPR013525">
    <property type="entry name" value="ABC2_TM"/>
</dbReference>
<dbReference type="InterPro" id="IPR003439">
    <property type="entry name" value="ABC_transporter-like_ATP-bd"/>
</dbReference>
<dbReference type="InterPro" id="IPR017871">
    <property type="entry name" value="ABC_transporter-like_CS"/>
</dbReference>
<dbReference type="InterPro" id="IPR026082">
    <property type="entry name" value="ABCA"/>
</dbReference>
<dbReference type="InterPro" id="IPR027417">
    <property type="entry name" value="P-loop_NTPase"/>
</dbReference>
<dbReference type="InterPro" id="IPR056264">
    <property type="entry name" value="R2_ABCA1-4-like"/>
</dbReference>
<dbReference type="PANTHER" id="PTHR19229">
    <property type="entry name" value="ATP-BINDING CASSETTE TRANSPORTER SUBFAMILY A ABCA"/>
    <property type="match status" value="1"/>
</dbReference>
<dbReference type="PANTHER" id="PTHR19229:SF100">
    <property type="entry name" value="CHOLESTEROL TRANSPORTER ABCA5"/>
    <property type="match status" value="1"/>
</dbReference>
<dbReference type="Pfam" id="PF12698">
    <property type="entry name" value="ABC2_membrane_3"/>
    <property type="match status" value="1"/>
</dbReference>
<dbReference type="Pfam" id="PF00005">
    <property type="entry name" value="ABC_tran"/>
    <property type="match status" value="2"/>
</dbReference>
<dbReference type="Pfam" id="PF23321">
    <property type="entry name" value="R1_ABCA1"/>
    <property type="match status" value="1"/>
</dbReference>
<dbReference type="SMART" id="SM00382">
    <property type="entry name" value="AAA"/>
    <property type="match status" value="2"/>
</dbReference>
<dbReference type="SUPFAM" id="SSF52540">
    <property type="entry name" value="P-loop containing nucleoside triphosphate hydrolases"/>
    <property type="match status" value="2"/>
</dbReference>
<dbReference type="PROSITE" id="PS00211">
    <property type="entry name" value="ABC_TRANSPORTER_1"/>
    <property type="match status" value="1"/>
</dbReference>
<dbReference type="PROSITE" id="PS50893">
    <property type="entry name" value="ABC_TRANSPORTER_2"/>
    <property type="match status" value="2"/>
</dbReference>
<accession>Q8WWZ7</accession>
<accession>Q8IVJ2</accession>
<accession>Q96LJ1</accession>
<accession>Q96MS4</accession>
<accession>Q96PZ9</accession>
<accession>Q9NY14</accession>
<evidence type="ECO:0000250" key="1"/>
<evidence type="ECO:0000250" key="2">
    <source>
        <dbReference type="UniProtKB" id="Q8CF82"/>
    </source>
</evidence>
<evidence type="ECO:0000250" key="3">
    <source>
        <dbReference type="UniProtKB" id="Q8K448"/>
    </source>
</evidence>
<evidence type="ECO:0000255" key="4"/>
<evidence type="ECO:0000255" key="5">
    <source>
        <dbReference type="PROSITE-ProRule" id="PRU00434"/>
    </source>
</evidence>
<evidence type="ECO:0000256" key="6">
    <source>
        <dbReference type="SAM" id="MobiDB-lite"/>
    </source>
</evidence>
<evidence type="ECO:0000269" key="7">
    <source>
    </source>
</evidence>
<evidence type="ECO:0000269" key="8">
    <source>
    </source>
</evidence>
<evidence type="ECO:0000269" key="9">
    <source>
    </source>
</evidence>
<evidence type="ECO:0000269" key="10">
    <source>
    </source>
</evidence>
<evidence type="ECO:0000269" key="11">
    <source>
    </source>
</evidence>
<evidence type="ECO:0000269" key="12">
    <source ref="1"/>
</evidence>
<evidence type="ECO:0000303" key="13">
    <source>
    </source>
</evidence>
<evidence type="ECO:0000303" key="14">
    <source>
    </source>
</evidence>
<evidence type="ECO:0000305" key="15"/>
<evidence type="ECO:0000305" key="16">
    <source>
    </source>
</evidence>
<evidence type="ECO:0000312" key="17">
    <source>
        <dbReference type="HGNC" id="HGNC:35"/>
    </source>
</evidence>
<organism>
    <name type="scientific">Homo sapiens</name>
    <name type="common">Human</name>
    <dbReference type="NCBI Taxonomy" id="9606"/>
    <lineage>
        <taxon>Eukaryota</taxon>
        <taxon>Metazoa</taxon>
        <taxon>Chordata</taxon>
        <taxon>Craniata</taxon>
        <taxon>Vertebrata</taxon>
        <taxon>Euteleostomi</taxon>
        <taxon>Mammalia</taxon>
        <taxon>Eutheria</taxon>
        <taxon>Euarchontoglires</taxon>
        <taxon>Primates</taxon>
        <taxon>Haplorrhini</taxon>
        <taxon>Catarrhini</taxon>
        <taxon>Hominidae</taxon>
        <taxon>Homo</taxon>
    </lineage>
</organism>
<sequence>MSTAIREVGVWRQTRTLLLKNYLIKCRTKKSSVQEILFPLFFLFWLILISMMHPNKKYEEVPNIELNPMDKFTLSNLILGYTPVTNITSSIMQKVSTDHLPDVIITEEYTNEKEMLTSSLSKPSNFVGVVFKDSMSYELRFFPDMIPVSSIYMDSRAGCSKSCEAAQYWSSGFTVLQASIDAAIIQLKTNVSLWKELESTKAVIMGETAVVEIDTFPRGVILIYLVIAFSPFGYFLAIHIVAEKEKKIKEFLKIMGLHDTAFWLSWVLLYTSLIFLMSLLMAVIATASLLFPQSSSIVIFLLFFLYGLSSVFFALMLTPLFKKSKHVGIVEFFVTVAFGFIGLMIILIESFPKSLVWLFSPFCHCTFVIGIAQVMHLEDFNEGASFSNLTAGPYPLIITIIMLTLNSIFYVLLAVYLDQVIPGEFGLRRSSLYFLKPSYWSKSKRNYEELSEGNVNGNISFSEIIEPVSSEFVGKEAIRISGIQKTYRKKGENVEALRNLSFDIYEGQITALLGHSGTGKSTLMNILCGLCPPSDGFASIYGHRVSEIDEMFEARKMIGICPQLDIHFDVLTVEENLSILASIKGIPANNIIQEVQKVLLDLDMQTIKDNQAKKLSGGQKRKLSLGIAVLGNPKILLLDEPTAGMDPCSRHIVWNLLKYRKANRVTVFSTHFMDEADILADRKAVISQGMLKCVGSSMFLKSKWGIGYRLSMYIDKYCATESLSSLVKQHIPGATLLQQNDQQLVYSLPFKDMDKFSGLFSALDSHSNLGVISYGVSMTTLEDVFLKLEVEAEIDQADYSVFTQQPLEEEMDSKSFDEMEQSLLILSETKAALVSTMSLWKQQMYTIAKFHFFTLKRESKSVRSVLLLLLIFFTVQIFMFLVHHSFKNAVVPIKLVPDLYFLKPGDKPHKYKTSLLLQNSADSDISDLISFFTSQNIMVTMINDSDYVSVAPHSAALNVMHSEKDYVFAAVFNSTMVYSLPILVNIISNYYLYHLNVTETIQIWSTPFFQEITDIVFKIELYFQAALLGIIVTAMPPYFAMENAENHKIKAYTQLKLSGLLPSAYWIGQAVVDIPLFFIILILMLGSLLAFHYGLYFYTVKFLAVVFCLIGYVPSVILFTYIASFTFKKILNTKEFWSFIYSVAALACIAITEITFFMGYTIATILHYAFCIIIPIYPLLGCLISFIKISWKNVRKNVDTYNPWDRLSVAVISPYLQCVLWIFLLQYYEKKYGGRSIRKDPFFRNLSTKSKNRKLPEPPDNEDEDEDVKAERLKVKELMGCQCCEEKPSIMVSNLHKEYDDKKDFLLSRKVKKVATKYISFCVKKGEILGLLGPNGAGKSTIINILVGDIEPTSGQVFLGDYSSETSEDDDSLKCMGYCPQINPLWPDTTLQEHFEIYGAVKGMSASDMKEVISRITHALDLKEHLQKTVKKLPAGIKRKLCFALSMLGNPQITLLDEPSTGMDPKAKQHMWRAIRTAFKNRKRAAILTTHYMEEAEAVCDRVAIMVSGQLRCIGTVQHLKSKFGKGYFLEIKLKDWIENLEVDRLQREIQYIFPNASRQESFSSILAYKIPKEDVQSLSQSFFKLEEAKHAFAIEEYSFSQATLEQVFVELTKEQEEEDNSCGTLNSTLWWERTQEDRVVF</sequence>